<evidence type="ECO:0000255" key="1">
    <source>
        <dbReference type="HAMAP-Rule" id="MF_00225"/>
    </source>
</evidence>
<gene>
    <name evidence="1" type="primary">pyrD</name>
    <name type="ordered locus">ELI_12815</name>
</gene>
<name>PYRD_ERYLH</name>
<reference key="1">
    <citation type="journal article" date="2009" name="J. Bacteriol.">
        <title>Complete genome sequence of Erythrobacter litoralis HTCC2594.</title>
        <authorList>
            <person name="Oh H.M."/>
            <person name="Giovannoni S.J."/>
            <person name="Ferriera S."/>
            <person name="Johnson J."/>
            <person name="Cho J.C."/>
        </authorList>
    </citation>
    <scope>NUCLEOTIDE SEQUENCE [LARGE SCALE GENOMIC DNA]</scope>
    <source>
        <strain>HTCC2594</strain>
    </source>
</reference>
<dbReference type="EC" id="1.3.5.2" evidence="1"/>
<dbReference type="EMBL" id="CP000157">
    <property type="protein sequence ID" value="ABC64655.1"/>
    <property type="molecule type" value="Genomic_DNA"/>
</dbReference>
<dbReference type="RefSeq" id="WP_011415477.1">
    <property type="nucleotide sequence ID" value="NC_007722.1"/>
</dbReference>
<dbReference type="SMR" id="Q2N6N6"/>
<dbReference type="STRING" id="314225.ELI_12815"/>
<dbReference type="KEGG" id="eli:ELI_12815"/>
<dbReference type="eggNOG" id="COG0167">
    <property type="taxonomic scope" value="Bacteria"/>
</dbReference>
<dbReference type="HOGENOM" id="CLU_013640_2_1_5"/>
<dbReference type="OrthoDB" id="9802377at2"/>
<dbReference type="UniPathway" id="UPA00070">
    <property type="reaction ID" value="UER00946"/>
</dbReference>
<dbReference type="Proteomes" id="UP000008808">
    <property type="component" value="Chromosome"/>
</dbReference>
<dbReference type="GO" id="GO:0005737">
    <property type="term" value="C:cytoplasm"/>
    <property type="evidence" value="ECO:0007669"/>
    <property type="project" value="InterPro"/>
</dbReference>
<dbReference type="GO" id="GO:0005886">
    <property type="term" value="C:plasma membrane"/>
    <property type="evidence" value="ECO:0007669"/>
    <property type="project" value="UniProtKB-SubCell"/>
</dbReference>
<dbReference type="GO" id="GO:0106430">
    <property type="term" value="F:dihydroorotate dehydrogenase (quinone) activity"/>
    <property type="evidence" value="ECO:0007669"/>
    <property type="project" value="UniProtKB-EC"/>
</dbReference>
<dbReference type="GO" id="GO:0006207">
    <property type="term" value="P:'de novo' pyrimidine nucleobase biosynthetic process"/>
    <property type="evidence" value="ECO:0007669"/>
    <property type="project" value="InterPro"/>
</dbReference>
<dbReference type="GO" id="GO:0044205">
    <property type="term" value="P:'de novo' UMP biosynthetic process"/>
    <property type="evidence" value="ECO:0007669"/>
    <property type="project" value="UniProtKB-UniRule"/>
</dbReference>
<dbReference type="CDD" id="cd04738">
    <property type="entry name" value="DHOD_2_like"/>
    <property type="match status" value="1"/>
</dbReference>
<dbReference type="Gene3D" id="3.20.20.70">
    <property type="entry name" value="Aldolase class I"/>
    <property type="match status" value="1"/>
</dbReference>
<dbReference type="HAMAP" id="MF_00225">
    <property type="entry name" value="DHO_dh_type2"/>
    <property type="match status" value="1"/>
</dbReference>
<dbReference type="InterPro" id="IPR013785">
    <property type="entry name" value="Aldolase_TIM"/>
</dbReference>
<dbReference type="InterPro" id="IPR050074">
    <property type="entry name" value="DHO_dehydrogenase"/>
</dbReference>
<dbReference type="InterPro" id="IPR012135">
    <property type="entry name" value="Dihydroorotate_DH_1_2"/>
</dbReference>
<dbReference type="InterPro" id="IPR005719">
    <property type="entry name" value="Dihydroorotate_DH_2"/>
</dbReference>
<dbReference type="InterPro" id="IPR005720">
    <property type="entry name" value="Dihydroorotate_DH_cat"/>
</dbReference>
<dbReference type="InterPro" id="IPR001295">
    <property type="entry name" value="Dihydroorotate_DH_CS"/>
</dbReference>
<dbReference type="NCBIfam" id="NF003645">
    <property type="entry name" value="PRK05286.1-2"/>
    <property type="match status" value="1"/>
</dbReference>
<dbReference type="NCBIfam" id="NF003652">
    <property type="entry name" value="PRK05286.2-5"/>
    <property type="match status" value="1"/>
</dbReference>
<dbReference type="NCBIfam" id="TIGR01036">
    <property type="entry name" value="pyrD_sub2"/>
    <property type="match status" value="1"/>
</dbReference>
<dbReference type="PANTHER" id="PTHR48109:SF4">
    <property type="entry name" value="DIHYDROOROTATE DEHYDROGENASE (QUINONE), MITOCHONDRIAL"/>
    <property type="match status" value="1"/>
</dbReference>
<dbReference type="PANTHER" id="PTHR48109">
    <property type="entry name" value="DIHYDROOROTATE DEHYDROGENASE (QUINONE), MITOCHONDRIAL-RELATED"/>
    <property type="match status" value="1"/>
</dbReference>
<dbReference type="Pfam" id="PF01180">
    <property type="entry name" value="DHO_dh"/>
    <property type="match status" value="1"/>
</dbReference>
<dbReference type="PIRSF" id="PIRSF000164">
    <property type="entry name" value="DHO_oxidase"/>
    <property type="match status" value="1"/>
</dbReference>
<dbReference type="SUPFAM" id="SSF51395">
    <property type="entry name" value="FMN-linked oxidoreductases"/>
    <property type="match status" value="1"/>
</dbReference>
<dbReference type="PROSITE" id="PS00911">
    <property type="entry name" value="DHODEHASE_1"/>
    <property type="match status" value="1"/>
</dbReference>
<dbReference type="PROSITE" id="PS00912">
    <property type="entry name" value="DHODEHASE_2"/>
    <property type="match status" value="1"/>
</dbReference>
<organism>
    <name type="scientific">Erythrobacter litoralis (strain HTCC2594)</name>
    <dbReference type="NCBI Taxonomy" id="314225"/>
    <lineage>
        <taxon>Bacteria</taxon>
        <taxon>Pseudomonadati</taxon>
        <taxon>Pseudomonadota</taxon>
        <taxon>Alphaproteobacteria</taxon>
        <taxon>Sphingomonadales</taxon>
        <taxon>Erythrobacteraceae</taxon>
        <taxon>Erythrobacter/Porphyrobacter group</taxon>
        <taxon>Erythrobacter</taxon>
    </lineage>
</organism>
<accession>Q2N6N6</accession>
<proteinExistence type="inferred from homology"/>
<comment type="function">
    <text evidence="1">Catalyzes the conversion of dihydroorotate to orotate with quinone as electron acceptor.</text>
</comment>
<comment type="catalytic activity">
    <reaction evidence="1">
        <text>(S)-dihydroorotate + a quinone = orotate + a quinol</text>
        <dbReference type="Rhea" id="RHEA:30187"/>
        <dbReference type="ChEBI" id="CHEBI:24646"/>
        <dbReference type="ChEBI" id="CHEBI:30839"/>
        <dbReference type="ChEBI" id="CHEBI:30864"/>
        <dbReference type="ChEBI" id="CHEBI:132124"/>
        <dbReference type="EC" id="1.3.5.2"/>
    </reaction>
</comment>
<comment type="cofactor">
    <cofactor evidence="1">
        <name>FMN</name>
        <dbReference type="ChEBI" id="CHEBI:58210"/>
    </cofactor>
    <text evidence="1">Binds 1 FMN per subunit.</text>
</comment>
<comment type="pathway">
    <text evidence="1">Pyrimidine metabolism; UMP biosynthesis via de novo pathway; orotate from (S)-dihydroorotate (quinone route): step 1/1.</text>
</comment>
<comment type="subunit">
    <text evidence="1">Monomer.</text>
</comment>
<comment type="subcellular location">
    <subcellularLocation>
        <location evidence="1">Cell membrane</location>
        <topology evidence="1">Peripheral membrane protein</topology>
    </subcellularLocation>
</comment>
<comment type="similarity">
    <text evidence="1">Belongs to the dihydroorotate dehydrogenase family. Type 2 subfamily.</text>
</comment>
<protein>
    <recommendedName>
        <fullName evidence="1">Dihydroorotate dehydrogenase (quinone)</fullName>
        <ecNumber evidence="1">1.3.5.2</ecNumber>
    </recommendedName>
    <alternativeName>
        <fullName evidence="1">DHOdehase</fullName>
        <shortName evidence="1">DHOD</shortName>
        <shortName evidence="1">DHODase</shortName>
    </alternativeName>
    <alternativeName>
        <fullName evidence="1">Dihydroorotate oxidase</fullName>
    </alternativeName>
</protein>
<feature type="chain" id="PRO_0000336464" description="Dihydroorotate dehydrogenase (quinone)">
    <location>
        <begin position="1"/>
        <end position="343"/>
    </location>
</feature>
<feature type="active site" description="Nucleophile" evidence="1">
    <location>
        <position position="170"/>
    </location>
</feature>
<feature type="binding site" evidence="1">
    <location>
        <begin position="58"/>
        <end position="62"/>
    </location>
    <ligand>
        <name>FMN</name>
        <dbReference type="ChEBI" id="CHEBI:58210"/>
    </ligand>
</feature>
<feature type="binding site" evidence="1">
    <location>
        <position position="62"/>
    </location>
    <ligand>
        <name>substrate</name>
    </ligand>
</feature>
<feature type="binding site" evidence="1">
    <location>
        <position position="82"/>
    </location>
    <ligand>
        <name>FMN</name>
        <dbReference type="ChEBI" id="CHEBI:58210"/>
    </ligand>
</feature>
<feature type="binding site" evidence="1">
    <location>
        <begin position="107"/>
        <end position="111"/>
    </location>
    <ligand>
        <name>substrate</name>
    </ligand>
</feature>
<feature type="binding site" evidence="1">
    <location>
        <position position="136"/>
    </location>
    <ligand>
        <name>FMN</name>
        <dbReference type="ChEBI" id="CHEBI:58210"/>
    </ligand>
</feature>
<feature type="binding site" evidence="1">
    <location>
        <position position="167"/>
    </location>
    <ligand>
        <name>FMN</name>
        <dbReference type="ChEBI" id="CHEBI:58210"/>
    </ligand>
</feature>
<feature type="binding site" evidence="1">
    <location>
        <position position="167"/>
    </location>
    <ligand>
        <name>substrate</name>
    </ligand>
</feature>
<feature type="binding site" evidence="1">
    <location>
        <position position="172"/>
    </location>
    <ligand>
        <name>substrate</name>
    </ligand>
</feature>
<feature type="binding site" evidence="1">
    <location>
        <position position="206"/>
    </location>
    <ligand>
        <name>FMN</name>
        <dbReference type="ChEBI" id="CHEBI:58210"/>
    </ligand>
</feature>
<feature type="binding site" evidence="1">
    <location>
        <position position="234"/>
    </location>
    <ligand>
        <name>FMN</name>
        <dbReference type="ChEBI" id="CHEBI:58210"/>
    </ligand>
</feature>
<feature type="binding site" evidence="1">
    <location>
        <begin position="235"/>
        <end position="236"/>
    </location>
    <ligand>
        <name>substrate</name>
    </ligand>
</feature>
<feature type="binding site" evidence="1">
    <location>
        <position position="256"/>
    </location>
    <ligand>
        <name>FMN</name>
        <dbReference type="ChEBI" id="CHEBI:58210"/>
    </ligand>
</feature>
<feature type="binding site" evidence="1">
    <location>
        <position position="285"/>
    </location>
    <ligand>
        <name>FMN</name>
        <dbReference type="ChEBI" id="CHEBI:58210"/>
    </ligand>
</feature>
<feature type="binding site" evidence="1">
    <location>
        <begin position="306"/>
        <end position="307"/>
    </location>
    <ligand>
        <name>FMN</name>
        <dbReference type="ChEBI" id="CHEBI:58210"/>
    </ligand>
</feature>
<sequence length="343" mass="36304">MLFSLIRPAIHALDPERAHRFSIEALKLAPLPHSRHSDASLSVKVAGIRFPNPVGVAAGYDKDAEVPDALLGLGFGFVEVGSITPRPQEGNPKPRLFRLSRDRAVINRMGFNNAGADVAERRLRARAAKGGVIGINVGANKDSDDRIADYATMVRRMAPYASYLTANISSPNTPGLRALQDEGALTGLLDAVMEAPGADGPPVFLKVAPDLEPADVDAIARIAIDKGLGALIVSNTTIFRPDLQSRDRDETGGLSGAPLKPLALQRLRDFRSATGGAIPLVGVGGIATIDDAWERIRAGASLVQVYSAMVYEGPGLGRSIARGLSRKLREHGMASIEEAVGSE</sequence>
<keyword id="KW-1003">Cell membrane</keyword>
<keyword id="KW-0285">Flavoprotein</keyword>
<keyword id="KW-0288">FMN</keyword>
<keyword id="KW-0472">Membrane</keyword>
<keyword id="KW-0560">Oxidoreductase</keyword>
<keyword id="KW-0665">Pyrimidine biosynthesis</keyword>
<keyword id="KW-1185">Reference proteome</keyword>